<keyword id="KW-0025">Alternative splicing</keyword>
<keyword id="KW-0175">Coiled coil</keyword>
<keyword id="KW-1185">Reference proteome</keyword>
<accession>Q9JJF6</accession>
<comment type="alternative products">
    <event type="alternative splicing"/>
    <isoform>
        <id>Q9JJF6-1</id>
        <name>1</name>
        <sequence type="displayed"/>
    </isoform>
    <isoform>
        <id>Q9JJF6-2</id>
        <name>2</name>
        <sequence type="described" ref="VSP_039450"/>
    </isoform>
</comment>
<dbReference type="EMBL" id="AB041550">
    <property type="protein sequence ID" value="BAA95035.1"/>
    <property type="molecule type" value="mRNA"/>
</dbReference>
<dbReference type="EMBL" id="AC158626">
    <property type="status" value="NOT_ANNOTATED_CDS"/>
    <property type="molecule type" value="Genomic_DNA"/>
</dbReference>
<dbReference type="CCDS" id="CCDS51840.1">
    <molecule id="Q9JJF6-1"/>
</dbReference>
<dbReference type="RefSeq" id="NP_001153169.1">
    <molecule id="Q9JJF6-1"/>
    <property type="nucleotide sequence ID" value="NM_001159697.1"/>
</dbReference>
<dbReference type="RefSeq" id="XP_017177180.1">
    <molecule id="Q9JJF6-1"/>
    <property type="nucleotide sequence ID" value="XM_017321691.3"/>
</dbReference>
<dbReference type="SMR" id="Q9JJF6"/>
<dbReference type="FunCoup" id="Q9JJF6">
    <property type="interactions" value="16"/>
</dbReference>
<dbReference type="STRING" id="10090.ENSMUSP00000138649"/>
<dbReference type="iPTMnet" id="Q9JJF6"/>
<dbReference type="PhosphoSitePlus" id="Q9JJF6"/>
<dbReference type="jPOST" id="Q9JJF6"/>
<dbReference type="PaxDb" id="10090-ENSMUSP00000138649"/>
<dbReference type="ProteomicsDB" id="277762">
    <molecule id="Q9JJF6-1"/>
</dbReference>
<dbReference type="ProteomicsDB" id="277763">
    <molecule id="Q9JJF6-2"/>
</dbReference>
<dbReference type="Antibodypedia" id="55576">
    <property type="antibodies" value="22 antibodies from 8 providers"/>
</dbReference>
<dbReference type="Ensembl" id="ENSMUST00000159570.9">
    <molecule id="Q9JJF6-1"/>
    <property type="protein sequence ID" value="ENSMUSP00000138649.2"/>
    <property type="gene ID" value="ENSMUSG00000068263.12"/>
</dbReference>
<dbReference type="GeneID" id="58229"/>
<dbReference type="KEGG" id="mmu:58229"/>
<dbReference type="UCSC" id="uc009ctu.1">
    <molecule id="Q9JJF6-1"/>
    <property type="organism name" value="mouse"/>
</dbReference>
<dbReference type="AGR" id="MGI:3611451"/>
<dbReference type="CTD" id="79825"/>
<dbReference type="MGI" id="MGI:3611451">
    <property type="gene designation" value="Efcc1"/>
</dbReference>
<dbReference type="VEuPathDB" id="HostDB:ENSMUSG00000068263"/>
<dbReference type="eggNOG" id="ENOG502QUT5">
    <property type="taxonomic scope" value="Eukaryota"/>
</dbReference>
<dbReference type="GeneTree" id="ENSGT00950000183014"/>
<dbReference type="HOGENOM" id="CLU_456299_0_0_1"/>
<dbReference type="InParanoid" id="Q9JJF6"/>
<dbReference type="OMA" id="RCDDKAF"/>
<dbReference type="OrthoDB" id="10054715at2759"/>
<dbReference type="PhylomeDB" id="Q9JJF6"/>
<dbReference type="TreeFam" id="TF330736"/>
<dbReference type="BioGRID-ORCS" id="58229">
    <property type="hits" value="2 hits in 74 CRISPR screens"/>
</dbReference>
<dbReference type="ChiTaRS" id="Efcc1">
    <property type="organism name" value="mouse"/>
</dbReference>
<dbReference type="PRO" id="PR:Q9JJF6"/>
<dbReference type="Proteomes" id="UP000000589">
    <property type="component" value="Chromosome 6"/>
</dbReference>
<dbReference type="RNAct" id="Q9JJF6">
    <property type="molecule type" value="protein"/>
</dbReference>
<dbReference type="Bgee" id="ENSMUSG00000068263">
    <property type="expression patterns" value="Expressed in superior frontal gyrus and 49 other cell types or tissues"/>
</dbReference>
<dbReference type="ExpressionAtlas" id="Q9JJF6">
    <property type="expression patterns" value="baseline and differential"/>
</dbReference>
<dbReference type="GO" id="GO:0005509">
    <property type="term" value="F:calcium ion binding"/>
    <property type="evidence" value="ECO:0007669"/>
    <property type="project" value="InterPro"/>
</dbReference>
<dbReference type="InterPro" id="IPR031601">
    <property type="entry name" value="CCD48"/>
</dbReference>
<dbReference type="InterPro" id="IPR002048">
    <property type="entry name" value="EF_hand_dom"/>
</dbReference>
<dbReference type="PANTHER" id="PTHR45721">
    <property type="entry name" value="LAMIN DM0-RELATED"/>
    <property type="match status" value="1"/>
</dbReference>
<dbReference type="PANTHER" id="PTHR45721:SF2">
    <property type="entry name" value="LAMIN-B2"/>
    <property type="match status" value="1"/>
</dbReference>
<dbReference type="Pfam" id="PF15799">
    <property type="entry name" value="CCD48"/>
    <property type="match status" value="1"/>
</dbReference>
<dbReference type="PROSITE" id="PS50222">
    <property type="entry name" value="EF_HAND_2"/>
    <property type="match status" value="1"/>
</dbReference>
<sequence>MESSAGDPYRRPARRTQWLLSALAHHYGLDRGVENEIVVLATGLDQYLQEVFHHLDCRGAGRLPRADFRALCAVLGLNADGETATEDANSAEAASTNPAAGMIAGGDADVREEARLALRADPPELTFRQFHARLCGYFSSRAGPRLPRGALSEHIETQIRLRRPRRRRRPGSPSLHGGAYGERVAHLEEENSSLRELVEDLRAALQSSDARCLALQVGLWKSQSDIPEAAAHELQRAQGALAEAEARARRLQRGQVEVRLRTEEARQAVRRSLHRVRELEALARRVPCLQRQVQRLEAELRGYRSEGPQLLTPQQASPRPGNRNGEPTAGGTRDSDTTPEGVQRSDSRDTDEEDEQLFRSVEGQAASEEEEEERWQEKPGRPQAHGEVPLVQPSGCVSRCDDQTAETLKASFGHCDGAEHICTLELETHVTRLGEQLQTLGTPEEEAELQQMVEAEHLRLELQMVETERVRLSLLEEKLVDVLQLLQRLRDLNISKRALGKMLLNALDRNPSQEGTCGTLAILDTLHQALVGCELLQRNPSAPASTAPAHTNPFLISC</sequence>
<name>EFCC1_MOUSE</name>
<feature type="chain" id="PRO_0000342342" description="EF-hand and coiled-coil domain-containing protein 1">
    <location>
        <begin position="1"/>
        <end position="558"/>
    </location>
</feature>
<feature type="domain" description="EF-hand" evidence="2">
    <location>
        <begin position="43"/>
        <end position="78"/>
    </location>
</feature>
<feature type="region of interest" description="Disordered" evidence="3">
    <location>
        <begin position="161"/>
        <end position="183"/>
    </location>
</feature>
<feature type="region of interest" description="Disordered" evidence="3">
    <location>
        <begin position="304"/>
        <end position="395"/>
    </location>
</feature>
<feature type="coiled-coil region" evidence="1">
    <location>
        <begin position="179"/>
        <end position="304"/>
    </location>
</feature>
<feature type="coiled-coil region" evidence="1">
    <location>
        <begin position="453"/>
        <end position="495"/>
    </location>
</feature>
<feature type="compositionally biased region" description="Basic residues" evidence="3">
    <location>
        <begin position="161"/>
        <end position="170"/>
    </location>
</feature>
<feature type="splice variant" id="VSP_039450" description="In isoform 2." evidence="4">
    <location>
        <begin position="305"/>
        <end position="558"/>
    </location>
</feature>
<reference key="1">
    <citation type="submission" date="2000-04" db="EMBL/GenBank/DDBJ databases">
        <title>Isolation of full-length cDNA clones from mouse brain cDNA library made by oligo-capping method.</title>
        <authorList>
            <person name="Osada N."/>
            <person name="Kusuda J."/>
            <person name="Tanuma R."/>
            <person name="Ito A."/>
            <person name="Hirata M."/>
            <person name="Sugano S."/>
            <person name="Hashimoto K."/>
        </authorList>
    </citation>
    <scope>NUCLEOTIDE SEQUENCE [LARGE SCALE MRNA] (ISOFORM 2)</scope>
    <source>
        <strain>C57BL/6J</strain>
        <tissue>Brain</tissue>
    </source>
</reference>
<reference key="2">
    <citation type="journal article" date="2009" name="PLoS Biol.">
        <title>Lineage-specific biology revealed by a finished genome assembly of the mouse.</title>
        <authorList>
            <person name="Church D.M."/>
            <person name="Goodstadt L."/>
            <person name="Hillier L.W."/>
            <person name="Zody M.C."/>
            <person name="Goldstein S."/>
            <person name="She X."/>
            <person name="Bult C.J."/>
            <person name="Agarwala R."/>
            <person name="Cherry J.L."/>
            <person name="DiCuccio M."/>
            <person name="Hlavina W."/>
            <person name="Kapustin Y."/>
            <person name="Meric P."/>
            <person name="Maglott D."/>
            <person name="Birtle Z."/>
            <person name="Marques A.C."/>
            <person name="Graves T."/>
            <person name="Zhou S."/>
            <person name="Teague B."/>
            <person name="Potamousis K."/>
            <person name="Churas C."/>
            <person name="Place M."/>
            <person name="Herschleb J."/>
            <person name="Runnheim R."/>
            <person name="Forrest D."/>
            <person name="Amos-Landgraf J."/>
            <person name="Schwartz D.C."/>
            <person name="Cheng Z."/>
            <person name="Lindblad-Toh K."/>
            <person name="Eichler E.E."/>
            <person name="Ponting C.P."/>
        </authorList>
    </citation>
    <scope>NUCLEOTIDE SEQUENCE [LARGE SCALE GENOMIC DNA]</scope>
    <source>
        <strain>C57BL/6J</strain>
    </source>
</reference>
<protein>
    <recommendedName>
        <fullName>EF-hand and coiled-coil domain-containing protein 1</fullName>
    </recommendedName>
    <alternativeName>
        <fullName>Coiled-coil domain-containing protein 48</fullName>
    </alternativeName>
</protein>
<evidence type="ECO:0000255" key="1"/>
<evidence type="ECO:0000255" key="2">
    <source>
        <dbReference type="PROSITE-ProRule" id="PRU00448"/>
    </source>
</evidence>
<evidence type="ECO:0000256" key="3">
    <source>
        <dbReference type="SAM" id="MobiDB-lite"/>
    </source>
</evidence>
<evidence type="ECO:0000303" key="4">
    <source ref="1"/>
</evidence>
<organism>
    <name type="scientific">Mus musculus</name>
    <name type="common">Mouse</name>
    <dbReference type="NCBI Taxonomy" id="10090"/>
    <lineage>
        <taxon>Eukaryota</taxon>
        <taxon>Metazoa</taxon>
        <taxon>Chordata</taxon>
        <taxon>Craniata</taxon>
        <taxon>Vertebrata</taxon>
        <taxon>Euteleostomi</taxon>
        <taxon>Mammalia</taxon>
        <taxon>Eutheria</taxon>
        <taxon>Euarchontoglires</taxon>
        <taxon>Glires</taxon>
        <taxon>Rodentia</taxon>
        <taxon>Myomorpha</taxon>
        <taxon>Muroidea</taxon>
        <taxon>Muridae</taxon>
        <taxon>Murinae</taxon>
        <taxon>Mus</taxon>
        <taxon>Mus</taxon>
    </lineage>
</organism>
<proteinExistence type="evidence at transcript level"/>
<gene>
    <name type="primary">Efcc1</name>
    <name type="synonym">Ccdc48</name>
    <name type="ORF">MNCb-4779</name>
</gene>